<name>COAT_MWLMV</name>
<reference key="1">
    <citation type="journal article" date="1991" name="Virology">
        <title>Helper virus-dependent replication, nucleotide sequence and genome organization of the satellite virus of maize white line mosaic virus.</title>
        <authorList>
            <person name="Zhang L."/>
            <person name="Zitter T.A."/>
            <person name="Palukaitis P."/>
        </authorList>
    </citation>
    <scope>NUCLEOTIDE SEQUENCE [GENOMIC RNA]</scope>
</reference>
<evidence type="ECO:0000256" key="1">
    <source>
        <dbReference type="SAM" id="MobiDB-lite"/>
    </source>
</evidence>
<evidence type="ECO:0000305" key="2"/>
<protein>
    <recommendedName>
        <fullName>Coat protein</fullName>
    </recommendedName>
</protein>
<keyword id="KW-0167">Capsid protein</keyword>
<keyword id="KW-1185">Reference proteome</keyword>
<keyword id="KW-0946">Virion</keyword>
<organism>
    <name type="scientific">Maize white line mosaic Satellite virus</name>
    <name type="common">MWLMV</name>
    <name type="synonym">Satellite maize white line mosaic virus</name>
    <dbReference type="NCBI Taxonomy" id="31503"/>
    <lineage>
        <taxon>Viruses</taxon>
        <taxon>Riboviria</taxon>
        <taxon>Aumaivirus</taxon>
        <taxon>Maize aumaivirus 1</taxon>
    </lineage>
</organism>
<dbReference type="EMBL" id="M55012">
    <property type="protein sequence ID" value="AAA47885.1"/>
    <property type="molecule type" value="Genomic_RNA"/>
</dbReference>
<dbReference type="PIR" id="A38543">
    <property type="entry name" value="VCWZMW"/>
</dbReference>
<dbReference type="RefSeq" id="NP_619744.1">
    <property type="nucleotide sequence ID" value="NC_003631.1"/>
</dbReference>
<dbReference type="SMR" id="P29151"/>
<dbReference type="GeneID" id="940240"/>
<dbReference type="KEGG" id="vg:940240"/>
<dbReference type="OrthoDB" id="33892at10239"/>
<dbReference type="Proteomes" id="UP000202324">
    <property type="component" value="Genome"/>
</dbReference>
<dbReference type="GO" id="GO:0019028">
    <property type="term" value="C:viral capsid"/>
    <property type="evidence" value="ECO:0007669"/>
    <property type="project" value="UniProtKB-KW"/>
</dbReference>
<dbReference type="GO" id="GO:0005198">
    <property type="term" value="F:structural molecule activity"/>
    <property type="evidence" value="ECO:0007669"/>
    <property type="project" value="InterPro"/>
</dbReference>
<dbReference type="CDD" id="cd00259">
    <property type="entry name" value="STNV"/>
    <property type="match status" value="1"/>
</dbReference>
<dbReference type="Gene3D" id="2.60.120.20">
    <property type="match status" value="1"/>
</dbReference>
<dbReference type="InterPro" id="IPR005597">
    <property type="entry name" value="Satellite_CP-like"/>
</dbReference>
<dbReference type="InterPro" id="IPR010392">
    <property type="entry name" value="Satellite_virus_coat"/>
</dbReference>
<dbReference type="InterPro" id="IPR037164">
    <property type="entry name" value="Satellite_virus_coat_sf"/>
</dbReference>
<dbReference type="InterPro" id="IPR029053">
    <property type="entry name" value="Viral_coat"/>
</dbReference>
<dbReference type="Pfam" id="PF03898">
    <property type="entry name" value="TNV_CP"/>
    <property type="match status" value="1"/>
</dbReference>
<dbReference type="PIRSF" id="PIRSF004094">
    <property type="entry name" value="Satellite_CP"/>
    <property type="match status" value="1"/>
</dbReference>
<dbReference type="SUPFAM" id="SSF88650">
    <property type="entry name" value="Satellite viruses"/>
    <property type="match status" value="1"/>
</dbReference>
<sequence length="218" mass="23959">MATQLTTRARRATRVSRKGSQPASKQDVKQVVKSILGQSLEHKRANLLLPPTVVNTTGNIYCLTQFVIEGDGISQRTGRVINLEQMVLRYRRTLDTTSANSGFLRYIVFLDTQNQGTLPAITDVLSSLDVSSGYEVLNAQQNRFKFLLDEVESLCASATNLSKASTLTFNQKVQVHYGGAADAATSNRRNAVFFLELSDKVATGPQTRLGVQLKFTDA</sequence>
<feature type="chain" id="PRO_0000222536" description="Coat protein">
    <location>
        <begin position="1"/>
        <end position="218"/>
    </location>
</feature>
<feature type="region of interest" description="Disordered" evidence="1">
    <location>
        <begin position="1"/>
        <end position="26"/>
    </location>
</feature>
<feature type="compositionally biased region" description="Basic residues" evidence="1">
    <location>
        <begin position="8"/>
        <end position="17"/>
    </location>
</feature>
<proteinExistence type="predicted"/>
<accession>P29151</accession>
<organismHost>
    <name type="scientific">Zea mays</name>
    <name type="common">Maize</name>
    <dbReference type="NCBI Taxonomy" id="4577"/>
</organismHost>
<comment type="subcellular location">
    <subcellularLocation>
        <location evidence="2">Virion</location>
    </subcellularLocation>
</comment>